<organism>
    <name type="scientific">Dictyostelium discoideum</name>
    <name type="common">Social amoeba</name>
    <dbReference type="NCBI Taxonomy" id="44689"/>
    <lineage>
        <taxon>Eukaryota</taxon>
        <taxon>Amoebozoa</taxon>
        <taxon>Evosea</taxon>
        <taxon>Eumycetozoa</taxon>
        <taxon>Dictyostelia</taxon>
        <taxon>Dictyosteliales</taxon>
        <taxon>Dictyosteliaceae</taxon>
        <taxon>Dictyostelium</taxon>
    </lineage>
</organism>
<dbReference type="EMBL" id="AAFI02000047">
    <property type="protein sequence ID" value="EAL66086.1"/>
    <property type="molecule type" value="Genomic_DNA"/>
</dbReference>
<dbReference type="RefSeq" id="XP_640058.1">
    <property type="nucleotide sequence ID" value="XM_634966.1"/>
</dbReference>
<dbReference type="SMR" id="Q54SI1"/>
<dbReference type="FunCoup" id="Q54SI1">
    <property type="interactions" value="26"/>
</dbReference>
<dbReference type="STRING" id="44689.Q54SI1"/>
<dbReference type="PaxDb" id="44689-DDB0266834"/>
<dbReference type="EnsemblProtists" id="EAL66086">
    <property type="protein sequence ID" value="EAL66086"/>
    <property type="gene ID" value="DDB_G0282453"/>
</dbReference>
<dbReference type="GeneID" id="8623585"/>
<dbReference type="KEGG" id="ddi:DDB_G0282453"/>
<dbReference type="dictyBase" id="DDB_G0282453">
    <property type="gene designation" value="med1"/>
</dbReference>
<dbReference type="VEuPathDB" id="AmoebaDB:DDB_G0282453"/>
<dbReference type="eggNOG" id="ENOG502SF7Q">
    <property type="taxonomic scope" value="Eukaryota"/>
</dbReference>
<dbReference type="HOGENOM" id="CLU_382400_0_0_1"/>
<dbReference type="InParanoid" id="Q54SI1"/>
<dbReference type="OMA" id="QTIKFTC"/>
<dbReference type="PRO" id="PR:Q54SI1"/>
<dbReference type="Proteomes" id="UP000002195">
    <property type="component" value="Chromosome 3"/>
</dbReference>
<dbReference type="GO" id="GO:0016592">
    <property type="term" value="C:mediator complex"/>
    <property type="evidence" value="ECO:0000250"/>
    <property type="project" value="dictyBase"/>
</dbReference>
<dbReference type="GO" id="GO:0003712">
    <property type="term" value="F:transcription coregulator activity"/>
    <property type="evidence" value="ECO:0007669"/>
    <property type="project" value="InterPro"/>
</dbReference>
<dbReference type="GO" id="GO:0045944">
    <property type="term" value="P:positive regulation of transcription by RNA polymerase II"/>
    <property type="evidence" value="ECO:0007669"/>
    <property type="project" value="UniProtKB-ARBA"/>
</dbReference>
<dbReference type="InterPro" id="IPR051999">
    <property type="entry name" value="Mediator_complex_subunit_1"/>
</dbReference>
<dbReference type="InterPro" id="IPR019680">
    <property type="entry name" value="Mediator_Med1"/>
</dbReference>
<dbReference type="PANTHER" id="PTHR12881">
    <property type="entry name" value="MEDIATOR OF RNA POLYMERASE II TRANSCRIPTION SUBUNIT 1"/>
    <property type="match status" value="1"/>
</dbReference>
<dbReference type="PANTHER" id="PTHR12881:SF10">
    <property type="entry name" value="MEDIATOR OF RNA POLYMERASE II TRANSCRIPTION SUBUNIT 1"/>
    <property type="match status" value="1"/>
</dbReference>
<dbReference type="Pfam" id="PF10744">
    <property type="entry name" value="Med1"/>
    <property type="match status" value="1"/>
</dbReference>
<name>MED1_DICDI</name>
<comment type="function">
    <text evidence="1">Component of the Mediator complex, a coactivator involved in the regulated transcription of nearly all RNA polymerase II-dependent genes. Mediator functions as a bridge to convey information from gene-specific regulatory proteins to the basal RNA polymerase II transcription machinery. Mediator is recruited to promoters by direct interactions with regulatory proteins and serves as a scaffold for the assembly of a functional preinitiation complex with RNA polymerase II and the general transcription factors (By similarity).</text>
</comment>
<comment type="subunit">
    <text evidence="1">Component of the Mediator complex.</text>
</comment>
<comment type="subcellular location">
    <subcellularLocation>
        <location evidence="1">Nucleus</location>
    </subcellularLocation>
</comment>
<comment type="similarity">
    <text evidence="4">Belongs to the Mediator complex subunit 1 family.</text>
</comment>
<proteinExistence type="inferred from homology"/>
<sequence>MDHHKQLTLQTTLESCNNLYNLLFNSIGSIKPSQQQQQQQQNQKNTNSVTSNTNIINDQEIFKLNKFHLYGENNIDELYNSIELQLQTIKFTCQQYRQWDSTERDSIKFFNTQKLYNQSQQRGNLVSKTLFDCSLLGKIYLNQQKEQQQQQKQKNKQQQQQPQPLVEDLSKNISKTVEVKRKLGLLAGKLQEMTNELNNKYSTFSVLDDLLGLLKSNTEIDYNSDSYVSCNISSSTFLLDIDIYHNGEIKEVKLVHILTTTGEVEPAEQQFNDELTNSLKTDMKEFIKKVQRICDLDLLFRKYKHFDLQKAFSILQSDFLNISINSNIKYIDNKEIEMNKGFGEIKLDCCGVLIKYFQSYIEKISKMNEPYSIMIEMESSAVTNNGSLIDQSEYSRLSLKTLLQKQQHTQPSAQTDYSEQQQQQSISTQLTSIEFNEKDCLDCEPLSSMLESDSIFSPVRLVCKLNKPILITNQQLSKILNLSKIHRSSQQPSQQQPSQQQQQQQQQQQQKKLNSVDESMNENGDSNIIENINELIKKYSIQNLLISSSSSSSSSNDSNISVNVDNSFDCEVYGMKQRYYYTGEFELGIEISRIPIYHPSQVYPTIQLLRQQIVFNILFKSCFQNLNISKSDDHHNIIDNNNDVKIFEITSNPPNSINIIFLHPIDNSFNSIDIFIKNNGDLEAFYYDNTTNIQPNIQKSTLFTKMLIKSLSISVSLACFFKNK</sequence>
<reference key="1">
    <citation type="journal article" date="2005" name="Nature">
        <title>The genome of the social amoeba Dictyostelium discoideum.</title>
        <authorList>
            <person name="Eichinger L."/>
            <person name="Pachebat J.A."/>
            <person name="Gloeckner G."/>
            <person name="Rajandream M.A."/>
            <person name="Sucgang R."/>
            <person name="Berriman M."/>
            <person name="Song J."/>
            <person name="Olsen R."/>
            <person name="Szafranski K."/>
            <person name="Xu Q."/>
            <person name="Tunggal B."/>
            <person name="Kummerfeld S."/>
            <person name="Madera M."/>
            <person name="Konfortov B.A."/>
            <person name="Rivero F."/>
            <person name="Bankier A.T."/>
            <person name="Lehmann R."/>
            <person name="Hamlin N."/>
            <person name="Davies R."/>
            <person name="Gaudet P."/>
            <person name="Fey P."/>
            <person name="Pilcher K."/>
            <person name="Chen G."/>
            <person name="Saunders D."/>
            <person name="Sodergren E.J."/>
            <person name="Davis P."/>
            <person name="Kerhornou A."/>
            <person name="Nie X."/>
            <person name="Hall N."/>
            <person name="Anjard C."/>
            <person name="Hemphill L."/>
            <person name="Bason N."/>
            <person name="Farbrother P."/>
            <person name="Desany B."/>
            <person name="Just E."/>
            <person name="Morio T."/>
            <person name="Rost R."/>
            <person name="Churcher C.M."/>
            <person name="Cooper J."/>
            <person name="Haydock S."/>
            <person name="van Driessche N."/>
            <person name="Cronin A."/>
            <person name="Goodhead I."/>
            <person name="Muzny D.M."/>
            <person name="Mourier T."/>
            <person name="Pain A."/>
            <person name="Lu M."/>
            <person name="Harper D."/>
            <person name="Lindsay R."/>
            <person name="Hauser H."/>
            <person name="James K.D."/>
            <person name="Quiles M."/>
            <person name="Madan Babu M."/>
            <person name="Saito T."/>
            <person name="Buchrieser C."/>
            <person name="Wardroper A."/>
            <person name="Felder M."/>
            <person name="Thangavelu M."/>
            <person name="Johnson D."/>
            <person name="Knights A."/>
            <person name="Loulseged H."/>
            <person name="Mungall K.L."/>
            <person name="Oliver K."/>
            <person name="Price C."/>
            <person name="Quail M.A."/>
            <person name="Urushihara H."/>
            <person name="Hernandez J."/>
            <person name="Rabbinowitsch E."/>
            <person name="Steffen D."/>
            <person name="Sanders M."/>
            <person name="Ma J."/>
            <person name="Kohara Y."/>
            <person name="Sharp S."/>
            <person name="Simmonds M.N."/>
            <person name="Spiegler S."/>
            <person name="Tivey A."/>
            <person name="Sugano S."/>
            <person name="White B."/>
            <person name="Walker D."/>
            <person name="Woodward J.R."/>
            <person name="Winckler T."/>
            <person name="Tanaka Y."/>
            <person name="Shaulsky G."/>
            <person name="Schleicher M."/>
            <person name="Weinstock G.M."/>
            <person name="Rosenthal A."/>
            <person name="Cox E.C."/>
            <person name="Chisholm R.L."/>
            <person name="Gibbs R.A."/>
            <person name="Loomis W.F."/>
            <person name="Platzer M."/>
            <person name="Kay R.R."/>
            <person name="Williams J.G."/>
            <person name="Dear P.H."/>
            <person name="Noegel A.A."/>
            <person name="Barrell B.G."/>
            <person name="Kuspa A."/>
        </authorList>
    </citation>
    <scope>NUCLEOTIDE SEQUENCE [LARGE SCALE GENOMIC DNA]</scope>
    <source>
        <strain>AX4</strain>
    </source>
</reference>
<reference key="2">
    <citation type="journal article" date="2008" name="Nucleic Acids Res.">
        <title>Comparative genomics supports a deep evolutionary origin for the large, four-module transcriptional mediator complex.</title>
        <authorList>
            <person name="Bourbon H.-M."/>
        </authorList>
    </citation>
    <scope>NOMENCLATURE</scope>
</reference>
<gene>
    <name type="primary">med1</name>
    <name type="ORF">DDB_G0282453</name>
</gene>
<protein>
    <recommendedName>
        <fullName>Putative mediator of RNA polymerase II transcription subunit 1</fullName>
    </recommendedName>
    <alternativeName>
        <fullName>Putative mediator complex subunit 1</fullName>
    </alternativeName>
</protein>
<evidence type="ECO:0000250" key="1"/>
<evidence type="ECO:0000255" key="2"/>
<evidence type="ECO:0000256" key="3">
    <source>
        <dbReference type="SAM" id="MobiDB-lite"/>
    </source>
</evidence>
<evidence type="ECO:0000305" key="4"/>
<accession>Q54SI1</accession>
<keyword id="KW-0010">Activator</keyword>
<keyword id="KW-0175">Coiled coil</keyword>
<keyword id="KW-0539">Nucleus</keyword>
<keyword id="KW-1185">Reference proteome</keyword>
<keyword id="KW-0804">Transcription</keyword>
<keyword id="KW-0805">Transcription regulation</keyword>
<feature type="chain" id="PRO_0000379419" description="Putative mediator of RNA polymerase II transcription subunit 1">
    <location>
        <begin position="1"/>
        <end position="724"/>
    </location>
</feature>
<feature type="region of interest" description="Disordered" evidence="3">
    <location>
        <begin position="33"/>
        <end position="52"/>
    </location>
</feature>
<feature type="region of interest" description="Disordered" evidence="3">
    <location>
        <begin position="147"/>
        <end position="167"/>
    </location>
</feature>
<feature type="region of interest" description="Disordered" evidence="3">
    <location>
        <begin position="486"/>
        <end position="524"/>
    </location>
</feature>
<feature type="coiled-coil region" evidence="2">
    <location>
        <begin position="140"/>
        <end position="200"/>
    </location>
</feature>
<feature type="compositionally biased region" description="Low complexity" evidence="3">
    <location>
        <begin position="147"/>
        <end position="164"/>
    </location>
</feature>
<feature type="compositionally biased region" description="Low complexity" evidence="3">
    <location>
        <begin position="488"/>
        <end position="510"/>
    </location>
</feature>
<feature type="compositionally biased region" description="Polar residues" evidence="3">
    <location>
        <begin position="511"/>
        <end position="524"/>
    </location>
</feature>